<comment type="function">
    <text evidence="1">Responsible for synthesis of pseudouridine from uracil-2457 in 23S ribosomal RNA.</text>
</comment>
<comment type="catalytic activity">
    <reaction>
        <text>uridine(2457) in 23S rRNA = pseudouridine(2457) in 23S rRNA</text>
        <dbReference type="Rhea" id="RHEA:38871"/>
        <dbReference type="Rhea" id="RHEA-COMP:10091"/>
        <dbReference type="Rhea" id="RHEA-COMP:10092"/>
        <dbReference type="ChEBI" id="CHEBI:65314"/>
        <dbReference type="ChEBI" id="CHEBI:65315"/>
        <dbReference type="EC" id="5.4.99.20"/>
    </reaction>
</comment>
<comment type="similarity">
    <text evidence="2">Belongs to the pseudouridine synthase RsuA family.</text>
</comment>
<organism>
    <name type="scientific">Xanthomonas campestris pv. campestris (strain ATCC 33913 / DSM 3586 / NCPPB 528 / LMG 568 / P 25)</name>
    <dbReference type="NCBI Taxonomy" id="190485"/>
    <lineage>
        <taxon>Bacteria</taxon>
        <taxon>Pseudomonadati</taxon>
        <taxon>Pseudomonadota</taxon>
        <taxon>Gammaproteobacteria</taxon>
        <taxon>Lysobacterales</taxon>
        <taxon>Lysobacteraceae</taxon>
        <taxon>Xanthomonas</taxon>
    </lineage>
</organism>
<reference key="1">
    <citation type="journal article" date="2002" name="Nature">
        <title>Comparison of the genomes of two Xanthomonas pathogens with differing host specificities.</title>
        <authorList>
            <person name="da Silva A.C.R."/>
            <person name="Ferro J.A."/>
            <person name="Reinach F.C."/>
            <person name="Farah C.S."/>
            <person name="Furlan L.R."/>
            <person name="Quaggio R.B."/>
            <person name="Monteiro-Vitorello C.B."/>
            <person name="Van Sluys M.A."/>
            <person name="Almeida N.F. Jr."/>
            <person name="Alves L.M.C."/>
            <person name="do Amaral A.M."/>
            <person name="Bertolini M.C."/>
            <person name="Camargo L.E.A."/>
            <person name="Camarotte G."/>
            <person name="Cannavan F."/>
            <person name="Cardozo J."/>
            <person name="Chambergo F."/>
            <person name="Ciapina L.P."/>
            <person name="Cicarelli R.M.B."/>
            <person name="Coutinho L.L."/>
            <person name="Cursino-Santos J.R."/>
            <person name="El-Dorry H."/>
            <person name="Faria J.B."/>
            <person name="Ferreira A.J.S."/>
            <person name="Ferreira R.C.C."/>
            <person name="Ferro M.I.T."/>
            <person name="Formighieri E.F."/>
            <person name="Franco M.C."/>
            <person name="Greggio C.C."/>
            <person name="Gruber A."/>
            <person name="Katsuyama A.M."/>
            <person name="Kishi L.T."/>
            <person name="Leite R.P."/>
            <person name="Lemos E.G.M."/>
            <person name="Lemos M.V.F."/>
            <person name="Locali E.C."/>
            <person name="Machado M.A."/>
            <person name="Madeira A.M.B.N."/>
            <person name="Martinez-Rossi N.M."/>
            <person name="Martins E.C."/>
            <person name="Meidanis J."/>
            <person name="Menck C.F.M."/>
            <person name="Miyaki C.Y."/>
            <person name="Moon D.H."/>
            <person name="Moreira L.M."/>
            <person name="Novo M.T.M."/>
            <person name="Okura V.K."/>
            <person name="Oliveira M.C."/>
            <person name="Oliveira V.R."/>
            <person name="Pereira H.A."/>
            <person name="Rossi A."/>
            <person name="Sena J.A.D."/>
            <person name="Silva C."/>
            <person name="de Souza R.F."/>
            <person name="Spinola L.A.F."/>
            <person name="Takita M.A."/>
            <person name="Tamura R.E."/>
            <person name="Teixeira E.C."/>
            <person name="Tezza R.I.D."/>
            <person name="Trindade dos Santos M."/>
            <person name="Truffi D."/>
            <person name="Tsai S.M."/>
            <person name="White F.F."/>
            <person name="Setubal J.C."/>
            <person name="Kitajima J.P."/>
        </authorList>
    </citation>
    <scope>NUCLEOTIDE SEQUENCE [LARGE SCALE GENOMIC DNA]</scope>
    <source>
        <strain>ATCC 33913 / DSM 3586 / NCPPB 528 / LMG 568 / P 25</strain>
    </source>
</reference>
<proteinExistence type="inferred from homology"/>
<name>RLUE_XANCP</name>
<accession>Q8PDR2</accession>
<protein>
    <recommendedName>
        <fullName>Ribosomal large subunit pseudouridine synthase E</fullName>
        <ecNumber>5.4.99.20</ecNumber>
    </recommendedName>
    <alternativeName>
        <fullName>rRNA pseudouridylate synthase E</fullName>
    </alternativeName>
    <alternativeName>
        <fullName>rRNA-uridine isomerase E</fullName>
    </alternativeName>
</protein>
<dbReference type="EC" id="5.4.99.20"/>
<dbReference type="EMBL" id="AE008922">
    <property type="protein sequence ID" value="AAM39592.1"/>
    <property type="molecule type" value="Genomic_DNA"/>
</dbReference>
<dbReference type="RefSeq" id="NP_635668.1">
    <property type="nucleotide sequence ID" value="NC_003902.1"/>
</dbReference>
<dbReference type="RefSeq" id="WP_011035528.1">
    <property type="nucleotide sequence ID" value="NC_003902.1"/>
</dbReference>
<dbReference type="SMR" id="Q8PDR2"/>
<dbReference type="STRING" id="190485.XCC0273"/>
<dbReference type="EnsemblBacteria" id="AAM39592">
    <property type="protein sequence ID" value="AAM39592"/>
    <property type="gene ID" value="XCC0273"/>
</dbReference>
<dbReference type="KEGG" id="xcc:XCC0273"/>
<dbReference type="PATRIC" id="fig|190485.4.peg.303"/>
<dbReference type="eggNOG" id="COG1187">
    <property type="taxonomic scope" value="Bacteria"/>
</dbReference>
<dbReference type="HOGENOM" id="CLU_024979_8_1_6"/>
<dbReference type="OrthoDB" id="9807213at2"/>
<dbReference type="Proteomes" id="UP000001010">
    <property type="component" value="Chromosome"/>
</dbReference>
<dbReference type="GO" id="GO:0160137">
    <property type="term" value="F:23S rRNA pseudouridine(2457) synthase activity"/>
    <property type="evidence" value="ECO:0007669"/>
    <property type="project" value="UniProtKB-EC"/>
</dbReference>
<dbReference type="GO" id="GO:0003723">
    <property type="term" value="F:RNA binding"/>
    <property type="evidence" value="ECO:0007669"/>
    <property type="project" value="InterPro"/>
</dbReference>
<dbReference type="GO" id="GO:0001522">
    <property type="term" value="P:pseudouridine synthesis"/>
    <property type="evidence" value="ECO:0007669"/>
    <property type="project" value="InterPro"/>
</dbReference>
<dbReference type="GO" id="GO:0006364">
    <property type="term" value="P:rRNA processing"/>
    <property type="evidence" value="ECO:0007669"/>
    <property type="project" value="UniProtKB-KW"/>
</dbReference>
<dbReference type="Gene3D" id="3.30.70.1560">
    <property type="entry name" value="Alpha-L RNA-binding motif"/>
    <property type="match status" value="1"/>
</dbReference>
<dbReference type="Gene3D" id="3.30.70.580">
    <property type="entry name" value="Pseudouridine synthase I, catalytic domain, N-terminal subdomain"/>
    <property type="match status" value="1"/>
</dbReference>
<dbReference type="InterPro" id="IPR042092">
    <property type="entry name" value="PsdUridine_s_RsuA/RluB/E/F_cat"/>
</dbReference>
<dbReference type="InterPro" id="IPR020103">
    <property type="entry name" value="PsdUridine_synth_cat_dom_sf"/>
</dbReference>
<dbReference type="InterPro" id="IPR006145">
    <property type="entry name" value="PsdUridine_synth_RsuA/RluA"/>
</dbReference>
<dbReference type="InterPro" id="IPR000748">
    <property type="entry name" value="PsdUridine_synth_RsuA/RluB/E/F"/>
</dbReference>
<dbReference type="InterPro" id="IPR018496">
    <property type="entry name" value="PsdUridine_synth_RsuA/RluB_CS"/>
</dbReference>
<dbReference type="InterPro" id="IPR050343">
    <property type="entry name" value="RsuA_PseudoU_synthase"/>
</dbReference>
<dbReference type="InterPro" id="IPR020094">
    <property type="entry name" value="TruA/RsuA/RluB/E/F_N"/>
</dbReference>
<dbReference type="NCBIfam" id="TIGR00093">
    <property type="entry name" value="pseudouridine synthase"/>
    <property type="match status" value="1"/>
</dbReference>
<dbReference type="PANTHER" id="PTHR47683">
    <property type="entry name" value="PSEUDOURIDINE SYNTHASE FAMILY PROTEIN-RELATED"/>
    <property type="match status" value="1"/>
</dbReference>
<dbReference type="PANTHER" id="PTHR47683:SF2">
    <property type="entry name" value="RNA-BINDING S4 DOMAIN-CONTAINING PROTEIN"/>
    <property type="match status" value="1"/>
</dbReference>
<dbReference type="Pfam" id="PF00849">
    <property type="entry name" value="PseudoU_synth_2"/>
    <property type="match status" value="1"/>
</dbReference>
<dbReference type="SUPFAM" id="SSF55120">
    <property type="entry name" value="Pseudouridine synthase"/>
    <property type="match status" value="1"/>
</dbReference>
<dbReference type="PROSITE" id="PS01149">
    <property type="entry name" value="PSI_RSU"/>
    <property type="match status" value="1"/>
</dbReference>
<gene>
    <name type="primary">rluE</name>
    <name type="ordered locus">XCC0273</name>
</gene>
<sequence>MLVLLNKPYGVLSQFSDRSTPPKRTLAEFGLPPQVYAAGRLDHDSEGLLLLTDDGPLAHRLTDPRHKQPKTYWVQVEGDPDTSQLQALCDGVLLNDGPTRPANVRRLECAPTLWPRDPPVRVRKTVPDAWLEVQITEGRNRQVRRMTASVGLPTLRLVRVAIGAWSLASLQPGQWRVDDARAVRPAR</sequence>
<feature type="chain" id="PRO_0000100014" description="Ribosomal large subunit pseudouridine synthase E">
    <location>
        <begin position="1"/>
        <end position="187"/>
    </location>
</feature>
<feature type="active site" description="Nucleophile" evidence="1">
    <location>
        <position position="42"/>
    </location>
</feature>
<keyword id="KW-0413">Isomerase</keyword>
<keyword id="KW-1185">Reference proteome</keyword>
<keyword id="KW-0698">rRNA processing</keyword>
<evidence type="ECO:0000250" key="1"/>
<evidence type="ECO:0000305" key="2"/>